<keyword id="KW-0433">Leucine-rich repeat</keyword>
<keyword id="KW-1185">Reference proteome</keyword>
<keyword id="KW-0677">Repeat</keyword>
<keyword id="KW-0833">Ubl conjugation pathway</keyword>
<comment type="function">
    <text evidence="1">Serves as substrate adapter subunit in an E3 ubiquitin ligase complex zyg11-cul2-elongin BC. Targets substrates bearing N-terminal glycine degrons for proteasomal degradation.</text>
</comment>
<comment type="similarity">
    <text evidence="2">Belongs to the zyg-11 family.</text>
</comment>
<comment type="sequence caution" evidence="2">
    <conflict type="erroneous gene model prediction">
        <sequence resource="EMBL-CDS" id="CAH68868"/>
    </conflict>
</comment>
<sequence>MIHLSQTMDKSSLPSLSDLCMSLVSSRLELFCEMRDDGSLSFREPLVFPQELADQLLCKMATDGVLNDSTVGIFRNCQQFRLRHACIRTARISAEAFHRALCPHRLVELDASRVNADLTIADILRGLSSNKSLQESLQRLVLNGLTMSSLEEPSRRCFSAMQGLRALSVSNVDFYDWGLADVCLLPRLESLDISNTSVSNLTPLLGLRSRLRYLTMHQLKRLEMTTAQLLAVLSQLEVLQHLDISDDKQFTSDVARQLLETPGILPQLVSLDVSGRKQVTDAAVKAFVEARPGMTFVGLLATDAGFSEFLSGEGSLKVTGEANETQICEALRRYSEREGFVREALFHLFSLTHAIEKPRPDILKLVALGMKNHPTTLNVQLAASACVFNLTKQELAFGIPVRLLGNVTQQLLEAMKTFPNHQQLQKNCLLSLCSDRILQEVPFNRFEAAKLVMQWLCNHEDQNMQRMAVAIISILAAKLSTEQTAQLGAELFIVKQLLHIVRQKTCQSTVDATLKFTLSALWNLTDESPTTCRHFIENQGLELFIKVLESFPSESSIQQKVLGLLNNIAEVSELHGELMVQSFLDHIRTLLHSPEVEVSYFAAGILAHLTSRGEKVWTLELTLRNTLLQQLHSAILKWPTPECEMVAYRSFNPFFPLLECFQTPGVQLWAAWAMQHVCSKNAGRYCSMLLEEGGLQHLEAITSHPKTHSDVRRLTESILDGLQRHRARTGYTAIPKTQAHREKCNP</sequence>
<name>ZYG11_DANRE</name>
<reference key="1">
    <citation type="journal article" date="2013" name="Nature">
        <title>The zebrafish reference genome sequence and its relationship to the human genome.</title>
        <authorList>
            <person name="Howe K."/>
            <person name="Clark M.D."/>
            <person name="Torroja C.F."/>
            <person name="Torrance J."/>
            <person name="Berthelot C."/>
            <person name="Muffato M."/>
            <person name="Collins J.E."/>
            <person name="Humphray S."/>
            <person name="McLaren K."/>
            <person name="Matthews L."/>
            <person name="McLaren S."/>
            <person name="Sealy I."/>
            <person name="Caccamo M."/>
            <person name="Churcher C."/>
            <person name="Scott C."/>
            <person name="Barrett J.C."/>
            <person name="Koch R."/>
            <person name="Rauch G.J."/>
            <person name="White S."/>
            <person name="Chow W."/>
            <person name="Kilian B."/>
            <person name="Quintais L.T."/>
            <person name="Guerra-Assuncao J.A."/>
            <person name="Zhou Y."/>
            <person name="Gu Y."/>
            <person name="Yen J."/>
            <person name="Vogel J.H."/>
            <person name="Eyre T."/>
            <person name="Redmond S."/>
            <person name="Banerjee R."/>
            <person name="Chi J."/>
            <person name="Fu B."/>
            <person name="Langley E."/>
            <person name="Maguire S.F."/>
            <person name="Laird G.K."/>
            <person name="Lloyd D."/>
            <person name="Kenyon E."/>
            <person name="Donaldson S."/>
            <person name="Sehra H."/>
            <person name="Almeida-King J."/>
            <person name="Loveland J."/>
            <person name="Trevanion S."/>
            <person name="Jones M."/>
            <person name="Quail M."/>
            <person name="Willey D."/>
            <person name="Hunt A."/>
            <person name="Burton J."/>
            <person name="Sims S."/>
            <person name="McLay K."/>
            <person name="Plumb B."/>
            <person name="Davis J."/>
            <person name="Clee C."/>
            <person name="Oliver K."/>
            <person name="Clark R."/>
            <person name="Riddle C."/>
            <person name="Elliot D."/>
            <person name="Threadgold G."/>
            <person name="Harden G."/>
            <person name="Ware D."/>
            <person name="Begum S."/>
            <person name="Mortimore B."/>
            <person name="Kerry G."/>
            <person name="Heath P."/>
            <person name="Phillimore B."/>
            <person name="Tracey A."/>
            <person name="Corby N."/>
            <person name="Dunn M."/>
            <person name="Johnson C."/>
            <person name="Wood J."/>
            <person name="Clark S."/>
            <person name="Pelan S."/>
            <person name="Griffiths G."/>
            <person name="Smith M."/>
            <person name="Glithero R."/>
            <person name="Howden P."/>
            <person name="Barker N."/>
            <person name="Lloyd C."/>
            <person name="Stevens C."/>
            <person name="Harley J."/>
            <person name="Holt K."/>
            <person name="Panagiotidis G."/>
            <person name="Lovell J."/>
            <person name="Beasley H."/>
            <person name="Henderson C."/>
            <person name="Gordon D."/>
            <person name="Auger K."/>
            <person name="Wright D."/>
            <person name="Collins J."/>
            <person name="Raisen C."/>
            <person name="Dyer L."/>
            <person name="Leung K."/>
            <person name="Robertson L."/>
            <person name="Ambridge K."/>
            <person name="Leongamornlert D."/>
            <person name="McGuire S."/>
            <person name="Gilderthorp R."/>
            <person name="Griffiths C."/>
            <person name="Manthravadi D."/>
            <person name="Nichol S."/>
            <person name="Barker G."/>
            <person name="Whitehead S."/>
            <person name="Kay M."/>
            <person name="Brown J."/>
            <person name="Murnane C."/>
            <person name="Gray E."/>
            <person name="Humphries M."/>
            <person name="Sycamore N."/>
            <person name="Barker D."/>
            <person name="Saunders D."/>
            <person name="Wallis J."/>
            <person name="Babbage A."/>
            <person name="Hammond S."/>
            <person name="Mashreghi-Mohammadi M."/>
            <person name="Barr L."/>
            <person name="Martin S."/>
            <person name="Wray P."/>
            <person name="Ellington A."/>
            <person name="Matthews N."/>
            <person name="Ellwood M."/>
            <person name="Woodmansey R."/>
            <person name="Clark G."/>
            <person name="Cooper J."/>
            <person name="Tromans A."/>
            <person name="Grafham D."/>
            <person name="Skuce C."/>
            <person name="Pandian R."/>
            <person name="Andrews R."/>
            <person name="Harrison E."/>
            <person name="Kimberley A."/>
            <person name="Garnett J."/>
            <person name="Fosker N."/>
            <person name="Hall R."/>
            <person name="Garner P."/>
            <person name="Kelly D."/>
            <person name="Bird C."/>
            <person name="Palmer S."/>
            <person name="Gehring I."/>
            <person name="Berger A."/>
            <person name="Dooley C.M."/>
            <person name="Ersan-Urun Z."/>
            <person name="Eser C."/>
            <person name="Geiger H."/>
            <person name="Geisler M."/>
            <person name="Karotki L."/>
            <person name="Kirn A."/>
            <person name="Konantz J."/>
            <person name="Konantz M."/>
            <person name="Oberlander M."/>
            <person name="Rudolph-Geiger S."/>
            <person name="Teucke M."/>
            <person name="Lanz C."/>
            <person name="Raddatz G."/>
            <person name="Osoegawa K."/>
            <person name="Zhu B."/>
            <person name="Rapp A."/>
            <person name="Widaa S."/>
            <person name="Langford C."/>
            <person name="Yang F."/>
            <person name="Schuster S.C."/>
            <person name="Carter N.P."/>
            <person name="Harrow J."/>
            <person name="Ning Z."/>
            <person name="Herrero J."/>
            <person name="Searle S.M."/>
            <person name="Enright A."/>
            <person name="Geisler R."/>
            <person name="Plasterk R.H."/>
            <person name="Lee C."/>
            <person name="Westerfield M."/>
            <person name="de Jong P.J."/>
            <person name="Zon L.I."/>
            <person name="Postlethwait J.H."/>
            <person name="Nusslein-Volhard C."/>
            <person name="Hubbard T.J."/>
            <person name="Roest Crollius H."/>
            <person name="Rogers J."/>
            <person name="Stemple D.L."/>
        </authorList>
    </citation>
    <scope>NUCLEOTIDE SEQUENCE [LARGE SCALE GENOMIC DNA]</scope>
    <source>
        <strain>Tuebingen</strain>
    </source>
</reference>
<reference key="2">
    <citation type="submission" date="2006-04" db="EMBL/GenBank/DDBJ databases">
        <authorList>
            <consortium name="NIH - Zebrafish Gene Collection (ZGC) project"/>
        </authorList>
    </citation>
    <scope>NUCLEOTIDE SEQUENCE [LARGE SCALE MRNA]</scope>
</reference>
<feature type="chain" id="PRO_0000305089" description="Protein zyg-11 homolog">
    <location>
        <begin position="1"/>
        <end position="746"/>
    </location>
</feature>
<feature type="repeat" description="LRR 1">
    <location>
        <begin position="185"/>
        <end position="209"/>
    </location>
</feature>
<feature type="repeat" description="LRR 2">
    <location>
        <begin position="216"/>
        <end position="241"/>
    </location>
</feature>
<feature type="repeat" description="LRR 3">
    <location>
        <begin position="265"/>
        <end position="289"/>
    </location>
</feature>
<gene>
    <name type="primary">zyg11</name>
    <name type="ORF">si:ch211-11m18.3</name>
    <name type="ORF">zgc:136612</name>
</gene>
<accession>Q5TYQ1</accession>
<accession>Q5TYQ2</accession>
<proteinExistence type="evidence at transcript level"/>
<organism>
    <name type="scientific">Danio rerio</name>
    <name type="common">Zebrafish</name>
    <name type="synonym">Brachydanio rerio</name>
    <dbReference type="NCBI Taxonomy" id="7955"/>
    <lineage>
        <taxon>Eukaryota</taxon>
        <taxon>Metazoa</taxon>
        <taxon>Chordata</taxon>
        <taxon>Craniata</taxon>
        <taxon>Vertebrata</taxon>
        <taxon>Euteleostomi</taxon>
        <taxon>Actinopterygii</taxon>
        <taxon>Neopterygii</taxon>
        <taxon>Teleostei</taxon>
        <taxon>Ostariophysi</taxon>
        <taxon>Cypriniformes</taxon>
        <taxon>Danionidae</taxon>
        <taxon>Danioninae</taxon>
        <taxon>Danio</taxon>
    </lineage>
</organism>
<dbReference type="EMBL" id="BX942844">
    <property type="protein sequence ID" value="CAH68868.1"/>
    <property type="status" value="ALT_SEQ"/>
    <property type="molecule type" value="Genomic_DNA"/>
</dbReference>
<dbReference type="EMBL" id="BX942844">
    <property type="protein sequence ID" value="CAH68869.1"/>
    <property type="molecule type" value="Genomic_DNA"/>
</dbReference>
<dbReference type="EMBL" id="BC115195">
    <property type="protein sequence ID" value="AAI15196.1"/>
    <property type="molecule type" value="mRNA"/>
</dbReference>
<dbReference type="RefSeq" id="NP_001035422.1">
    <property type="nucleotide sequence ID" value="NM_001040332.2"/>
</dbReference>
<dbReference type="SMR" id="Q5TYQ1"/>
<dbReference type="FunCoup" id="Q5TYQ1">
    <property type="interactions" value="777"/>
</dbReference>
<dbReference type="STRING" id="7955.ENSDARP00000094887"/>
<dbReference type="PaxDb" id="7955-ENSDARP00000094887"/>
<dbReference type="Ensembl" id="ENSDART00000104112">
    <property type="protein sequence ID" value="ENSDARP00000094887"/>
    <property type="gene ID" value="ENSDARG00000007737"/>
</dbReference>
<dbReference type="GeneID" id="555349"/>
<dbReference type="KEGG" id="dre:555349"/>
<dbReference type="AGR" id="ZFIN:ZDB-GENE-041014-17"/>
<dbReference type="CTD" id="555349"/>
<dbReference type="ZFIN" id="ZDB-GENE-041014-17">
    <property type="gene designation" value="zyg11"/>
</dbReference>
<dbReference type="eggNOG" id="KOG3665">
    <property type="taxonomic scope" value="Eukaryota"/>
</dbReference>
<dbReference type="HOGENOM" id="CLU_011533_1_0_1"/>
<dbReference type="InParanoid" id="Q5TYQ1"/>
<dbReference type="OrthoDB" id="120976at2759"/>
<dbReference type="PhylomeDB" id="Q5TYQ1"/>
<dbReference type="TreeFam" id="TF313007"/>
<dbReference type="PRO" id="PR:Q5TYQ1"/>
<dbReference type="Proteomes" id="UP000000437">
    <property type="component" value="Chromosome 20"/>
</dbReference>
<dbReference type="Bgee" id="ENSDARG00000007737">
    <property type="expression patterns" value="Expressed in pharyngeal gill and 25 other cell types or tissues"/>
</dbReference>
<dbReference type="ExpressionAtlas" id="Q5TYQ1">
    <property type="expression patterns" value="baseline"/>
</dbReference>
<dbReference type="GO" id="GO:0031462">
    <property type="term" value="C:Cul2-RING ubiquitin ligase complex"/>
    <property type="evidence" value="ECO:0000318"/>
    <property type="project" value="GO_Central"/>
</dbReference>
<dbReference type="GO" id="GO:1904888">
    <property type="term" value="P:cranial skeletal system development"/>
    <property type="evidence" value="ECO:0000315"/>
    <property type="project" value="ZFIN"/>
</dbReference>
<dbReference type="GO" id="GO:0030903">
    <property type="term" value="P:notochord development"/>
    <property type="evidence" value="ECO:0000315"/>
    <property type="project" value="ZFIN"/>
</dbReference>
<dbReference type="FunFam" id="1.25.10.10:FF:000086">
    <property type="entry name" value="protein zyg-11 homolog B isoform X2"/>
    <property type="match status" value="1"/>
</dbReference>
<dbReference type="FunFam" id="3.80.10.10:FF:000353">
    <property type="entry name" value="Zyg-11 family member B, cell cycle regulator"/>
    <property type="match status" value="1"/>
</dbReference>
<dbReference type="Gene3D" id="1.25.10.10">
    <property type="entry name" value="Leucine-rich Repeat Variant"/>
    <property type="match status" value="1"/>
</dbReference>
<dbReference type="Gene3D" id="3.80.10.10">
    <property type="entry name" value="Ribonuclease Inhibitor"/>
    <property type="match status" value="1"/>
</dbReference>
<dbReference type="InterPro" id="IPR011989">
    <property type="entry name" value="ARM-like"/>
</dbReference>
<dbReference type="InterPro" id="IPR016024">
    <property type="entry name" value="ARM-type_fold"/>
</dbReference>
<dbReference type="InterPro" id="IPR000225">
    <property type="entry name" value="Armadillo"/>
</dbReference>
<dbReference type="InterPro" id="IPR032675">
    <property type="entry name" value="LRR_dom_sf"/>
</dbReference>
<dbReference type="InterPro" id="IPR055142">
    <property type="entry name" value="ZER1-like_C"/>
</dbReference>
<dbReference type="InterPro" id="IPR051341">
    <property type="entry name" value="Zyg-11_UBL_adapter"/>
</dbReference>
<dbReference type="PANTHER" id="PTHR12904">
    <property type="match status" value="1"/>
</dbReference>
<dbReference type="PANTHER" id="PTHR12904:SF22">
    <property type="entry name" value="ZYG-11 FAMILY MEMBER B, CELL CYCLE REGULATOR"/>
    <property type="match status" value="1"/>
</dbReference>
<dbReference type="Pfam" id="PF22964">
    <property type="entry name" value="ZER1-like_2nd"/>
    <property type="match status" value="1"/>
</dbReference>
<dbReference type="SMART" id="SM00185">
    <property type="entry name" value="ARM"/>
    <property type="match status" value="3"/>
</dbReference>
<dbReference type="SUPFAM" id="SSF48371">
    <property type="entry name" value="ARM repeat"/>
    <property type="match status" value="1"/>
</dbReference>
<dbReference type="SUPFAM" id="SSF52047">
    <property type="entry name" value="RNI-like"/>
    <property type="match status" value="1"/>
</dbReference>
<protein>
    <recommendedName>
        <fullName>Protein zyg-11 homolog</fullName>
    </recommendedName>
</protein>
<evidence type="ECO:0000250" key="1">
    <source>
        <dbReference type="UniProtKB" id="Q9C0D3"/>
    </source>
</evidence>
<evidence type="ECO:0000305" key="2"/>